<evidence type="ECO:0000255" key="1">
    <source>
        <dbReference type="HAMAP-Rule" id="MF_03017"/>
    </source>
</evidence>
<name>KYNU1_ASPFC</name>
<organism>
    <name type="scientific">Aspergillus fumigatus (strain CBS 144.89 / FGSC A1163 / CEA10)</name>
    <name type="common">Neosartorya fumigata</name>
    <dbReference type="NCBI Taxonomy" id="451804"/>
    <lineage>
        <taxon>Eukaryota</taxon>
        <taxon>Fungi</taxon>
        <taxon>Dikarya</taxon>
        <taxon>Ascomycota</taxon>
        <taxon>Pezizomycotina</taxon>
        <taxon>Eurotiomycetes</taxon>
        <taxon>Eurotiomycetidae</taxon>
        <taxon>Eurotiales</taxon>
        <taxon>Aspergillaceae</taxon>
        <taxon>Aspergillus</taxon>
        <taxon>Aspergillus subgen. Fumigati</taxon>
    </lineage>
</organism>
<sequence length="509" mass="57148">MGSRLHVQVIHGGPPLPYKDDIRAFGKEYAEQLDAQDPLRRFRDEFIIPSKKDLKRKTLFPNDGMYSCGHPICFANTSCACVHAAETEETSDEKCIYLCGNSLGLQPRSTRKYIDHYLRTWATKGVTGHFVPHDDQLLPPFVDVDEAGAKLMAPIVGALKSEVAVMGTLTANLHLLMASFYRPTPERNKIIIEGKAFPSDHYAVESQIRHHNLDPKDAMVLIEPEDLDRPILDTKYILRVIDENAHSTALILLPAIQFYTGQYFDIQRITAHAQSKGILVGWDCAHAAGNVDLRLHDWNVDFAAWCTYKYLNAGPGGMAALFVHERHGRVDIEQAASGKEAFHPRFSGWWGGDKQTRFLMNNHFVPQQGAAGFQLSNPSVLDMNAVVASLELFNQTSMAEIRKKSLNLTGYLEHLLLRDPQTENSEKRPFSIITPSNPAERGAQLSIRLQPGLLDRVLESLNEDAVIIDERKPDVIRVAPAPLYNTYAEVWRFAQLFHLACDKALCGRK</sequence>
<comment type="function">
    <text evidence="1">Catalyzes the cleavage of L-kynurenine (L-Kyn) and L-3-hydroxykynurenine (L-3OHKyn) into anthranilic acid (AA) and 3-hydroxyanthranilic acid (3-OHAA), respectively.</text>
</comment>
<comment type="catalytic activity">
    <reaction evidence="1">
        <text>L-kynurenine + H2O = anthranilate + L-alanine + H(+)</text>
        <dbReference type="Rhea" id="RHEA:16813"/>
        <dbReference type="ChEBI" id="CHEBI:15377"/>
        <dbReference type="ChEBI" id="CHEBI:15378"/>
        <dbReference type="ChEBI" id="CHEBI:16567"/>
        <dbReference type="ChEBI" id="CHEBI:57959"/>
        <dbReference type="ChEBI" id="CHEBI:57972"/>
        <dbReference type="EC" id="3.7.1.3"/>
    </reaction>
</comment>
<comment type="catalytic activity">
    <reaction evidence="1">
        <text>3-hydroxy-L-kynurenine + H2O = 3-hydroxyanthranilate + L-alanine + H(+)</text>
        <dbReference type="Rhea" id="RHEA:25143"/>
        <dbReference type="ChEBI" id="CHEBI:15377"/>
        <dbReference type="ChEBI" id="CHEBI:15378"/>
        <dbReference type="ChEBI" id="CHEBI:36559"/>
        <dbReference type="ChEBI" id="CHEBI:57972"/>
        <dbReference type="ChEBI" id="CHEBI:58125"/>
        <dbReference type="EC" id="3.7.1.3"/>
    </reaction>
</comment>
<comment type="cofactor">
    <cofactor evidence="1">
        <name>pyridoxal 5'-phosphate</name>
        <dbReference type="ChEBI" id="CHEBI:597326"/>
    </cofactor>
</comment>
<comment type="pathway">
    <text evidence="1">Amino-acid degradation; L-kynurenine degradation; L-alanine and anthranilate from L-kynurenine: step 1/1.</text>
</comment>
<comment type="pathway">
    <text evidence="1">Cofactor biosynthesis; NAD(+) biosynthesis; quinolinate from L-kynurenine: step 2/3.</text>
</comment>
<comment type="subunit">
    <text evidence="1">Homodimer.</text>
</comment>
<comment type="subcellular location">
    <subcellularLocation>
        <location evidence="1">Cytoplasm</location>
    </subcellularLocation>
</comment>
<comment type="similarity">
    <text evidence="1">Belongs to the kynureninase family.</text>
</comment>
<protein>
    <recommendedName>
        <fullName evidence="1">Kynureninase 1</fullName>
        <ecNumber evidence="1">3.7.1.3</ecNumber>
    </recommendedName>
    <alternativeName>
        <fullName evidence="1">Biosynthesis of nicotinic acid protein 5-1</fullName>
    </alternativeName>
    <alternativeName>
        <fullName evidence="1">L-kynurenine hydrolase 1</fullName>
    </alternativeName>
</protein>
<reference key="1">
    <citation type="journal article" date="2008" name="PLoS Genet.">
        <title>Genomic islands in the pathogenic filamentous fungus Aspergillus fumigatus.</title>
        <authorList>
            <person name="Fedorova N.D."/>
            <person name="Khaldi N."/>
            <person name="Joardar V.S."/>
            <person name="Maiti R."/>
            <person name="Amedeo P."/>
            <person name="Anderson M.J."/>
            <person name="Crabtree J."/>
            <person name="Silva J.C."/>
            <person name="Badger J.H."/>
            <person name="Albarraq A."/>
            <person name="Angiuoli S."/>
            <person name="Bussey H."/>
            <person name="Bowyer P."/>
            <person name="Cotty P.J."/>
            <person name="Dyer P.S."/>
            <person name="Egan A."/>
            <person name="Galens K."/>
            <person name="Fraser-Liggett C.M."/>
            <person name="Haas B.J."/>
            <person name="Inman J.M."/>
            <person name="Kent R."/>
            <person name="Lemieux S."/>
            <person name="Malavazi I."/>
            <person name="Orvis J."/>
            <person name="Roemer T."/>
            <person name="Ronning C.M."/>
            <person name="Sundaram J.P."/>
            <person name="Sutton G."/>
            <person name="Turner G."/>
            <person name="Venter J.C."/>
            <person name="White O.R."/>
            <person name="Whitty B.R."/>
            <person name="Youngman P."/>
            <person name="Wolfe K.H."/>
            <person name="Goldman G.H."/>
            <person name="Wortman J.R."/>
            <person name="Jiang B."/>
            <person name="Denning D.W."/>
            <person name="Nierman W.C."/>
        </authorList>
    </citation>
    <scope>NUCLEOTIDE SEQUENCE [LARGE SCALE GENOMIC DNA]</scope>
    <source>
        <strain>CBS 144.89 / FGSC A1163 / CEA10</strain>
    </source>
</reference>
<proteinExistence type="inferred from homology"/>
<feature type="chain" id="PRO_0000356963" description="Kynureninase 1">
    <location>
        <begin position="1"/>
        <end position="509"/>
    </location>
</feature>
<feature type="binding site" evidence="1">
    <location>
        <position position="169"/>
    </location>
    <ligand>
        <name>pyridoxal 5'-phosphate</name>
        <dbReference type="ChEBI" id="CHEBI:597326"/>
    </ligand>
</feature>
<feature type="binding site" evidence="1">
    <location>
        <position position="170"/>
    </location>
    <ligand>
        <name>pyridoxal 5'-phosphate</name>
        <dbReference type="ChEBI" id="CHEBI:597326"/>
    </ligand>
</feature>
<feature type="binding site" evidence="1">
    <location>
        <begin position="197"/>
        <end position="200"/>
    </location>
    <ligand>
        <name>pyridoxal 5'-phosphate</name>
        <dbReference type="ChEBI" id="CHEBI:597326"/>
    </ligand>
</feature>
<feature type="binding site" evidence="1">
    <location>
        <position position="283"/>
    </location>
    <ligand>
        <name>pyridoxal 5'-phosphate</name>
        <dbReference type="ChEBI" id="CHEBI:597326"/>
    </ligand>
</feature>
<feature type="binding site" evidence="1">
    <location>
        <position position="286"/>
    </location>
    <ligand>
        <name>pyridoxal 5'-phosphate</name>
        <dbReference type="ChEBI" id="CHEBI:597326"/>
    </ligand>
</feature>
<feature type="binding site" evidence="1">
    <location>
        <position position="308"/>
    </location>
    <ligand>
        <name>pyridoxal 5'-phosphate</name>
        <dbReference type="ChEBI" id="CHEBI:597326"/>
    </ligand>
</feature>
<feature type="binding site" evidence="1">
    <location>
        <position position="349"/>
    </location>
    <ligand>
        <name>pyridoxal 5'-phosphate</name>
        <dbReference type="ChEBI" id="CHEBI:597326"/>
    </ligand>
</feature>
<feature type="binding site" evidence="1">
    <location>
        <position position="377"/>
    </location>
    <ligand>
        <name>pyridoxal 5'-phosphate</name>
        <dbReference type="ChEBI" id="CHEBI:597326"/>
    </ligand>
</feature>
<feature type="modified residue" description="N6-(pyridoxal phosphate)lysine" evidence="1">
    <location>
        <position position="309"/>
    </location>
</feature>
<gene>
    <name type="primary">bna5-1</name>
    <name type="ORF">AFUB_026170</name>
</gene>
<accession>B0XS72</accession>
<dbReference type="EC" id="3.7.1.3" evidence="1"/>
<dbReference type="EMBL" id="DS499595">
    <property type="protein sequence ID" value="EDP54558.1"/>
    <property type="molecule type" value="Genomic_DNA"/>
</dbReference>
<dbReference type="SMR" id="B0XS72"/>
<dbReference type="EnsemblFungi" id="EDP54558">
    <property type="protein sequence ID" value="EDP54558"/>
    <property type="gene ID" value="AFUB_026170"/>
</dbReference>
<dbReference type="VEuPathDB" id="FungiDB:AFUB_026170"/>
<dbReference type="HOGENOM" id="CLU_003433_4_0_1"/>
<dbReference type="OrthoDB" id="27976at5052"/>
<dbReference type="PhylomeDB" id="B0XS72"/>
<dbReference type="UniPathway" id="UPA00253">
    <property type="reaction ID" value="UER00329"/>
</dbReference>
<dbReference type="UniPathway" id="UPA00334">
    <property type="reaction ID" value="UER00455"/>
</dbReference>
<dbReference type="Proteomes" id="UP000001699">
    <property type="component" value="Unassembled WGS sequence"/>
</dbReference>
<dbReference type="GO" id="GO:0005737">
    <property type="term" value="C:cytoplasm"/>
    <property type="evidence" value="ECO:0007669"/>
    <property type="project" value="UniProtKB-SubCell"/>
</dbReference>
<dbReference type="GO" id="GO:0030429">
    <property type="term" value="F:kynureninase activity"/>
    <property type="evidence" value="ECO:0007669"/>
    <property type="project" value="UniProtKB-UniRule"/>
</dbReference>
<dbReference type="GO" id="GO:0030170">
    <property type="term" value="F:pyridoxal phosphate binding"/>
    <property type="evidence" value="ECO:0007669"/>
    <property type="project" value="UniProtKB-UniRule"/>
</dbReference>
<dbReference type="GO" id="GO:0034354">
    <property type="term" value="P:'de novo' NAD biosynthetic process from L-tryptophan"/>
    <property type="evidence" value="ECO:0007669"/>
    <property type="project" value="UniProtKB-UniRule"/>
</dbReference>
<dbReference type="GO" id="GO:0043420">
    <property type="term" value="P:anthranilate metabolic process"/>
    <property type="evidence" value="ECO:0007669"/>
    <property type="project" value="UniProtKB-UniRule"/>
</dbReference>
<dbReference type="GO" id="GO:0097053">
    <property type="term" value="P:L-kynurenine catabolic process"/>
    <property type="evidence" value="ECO:0007669"/>
    <property type="project" value="UniProtKB-UniRule"/>
</dbReference>
<dbReference type="GO" id="GO:0019441">
    <property type="term" value="P:L-tryptophan catabolic process to kynurenine"/>
    <property type="evidence" value="ECO:0007669"/>
    <property type="project" value="TreeGrafter"/>
</dbReference>
<dbReference type="GO" id="GO:0019805">
    <property type="term" value="P:quinolinate biosynthetic process"/>
    <property type="evidence" value="ECO:0007669"/>
    <property type="project" value="UniProtKB-UniRule"/>
</dbReference>
<dbReference type="FunFam" id="3.40.640.10:FF:000031">
    <property type="entry name" value="Kynureninase"/>
    <property type="match status" value="1"/>
</dbReference>
<dbReference type="Gene3D" id="3.90.1150.10">
    <property type="entry name" value="Aspartate Aminotransferase, domain 1"/>
    <property type="match status" value="1"/>
</dbReference>
<dbReference type="Gene3D" id="3.40.640.10">
    <property type="entry name" value="Type I PLP-dependent aspartate aminotransferase-like (Major domain)"/>
    <property type="match status" value="1"/>
</dbReference>
<dbReference type="HAMAP" id="MF_01970">
    <property type="entry name" value="Kynureninase"/>
    <property type="match status" value="1"/>
</dbReference>
<dbReference type="InterPro" id="IPR010111">
    <property type="entry name" value="Kynureninase"/>
</dbReference>
<dbReference type="InterPro" id="IPR015424">
    <property type="entry name" value="PyrdxlP-dep_Trfase"/>
</dbReference>
<dbReference type="InterPro" id="IPR015421">
    <property type="entry name" value="PyrdxlP-dep_Trfase_major"/>
</dbReference>
<dbReference type="InterPro" id="IPR015422">
    <property type="entry name" value="PyrdxlP-dep_Trfase_small"/>
</dbReference>
<dbReference type="NCBIfam" id="TIGR01814">
    <property type="entry name" value="kynureninase"/>
    <property type="match status" value="1"/>
</dbReference>
<dbReference type="PANTHER" id="PTHR14084">
    <property type="entry name" value="KYNURENINASE"/>
    <property type="match status" value="1"/>
</dbReference>
<dbReference type="PANTHER" id="PTHR14084:SF0">
    <property type="entry name" value="KYNURENINASE"/>
    <property type="match status" value="1"/>
</dbReference>
<dbReference type="Pfam" id="PF22580">
    <property type="entry name" value="KYNU_C"/>
    <property type="match status" value="1"/>
</dbReference>
<dbReference type="PIRSF" id="PIRSF038800">
    <property type="entry name" value="KYNU"/>
    <property type="match status" value="1"/>
</dbReference>
<dbReference type="SUPFAM" id="SSF53383">
    <property type="entry name" value="PLP-dependent transferases"/>
    <property type="match status" value="1"/>
</dbReference>
<keyword id="KW-0963">Cytoplasm</keyword>
<keyword id="KW-0378">Hydrolase</keyword>
<keyword id="KW-0662">Pyridine nucleotide biosynthesis</keyword>
<keyword id="KW-0663">Pyridoxal phosphate</keyword>